<dbReference type="EC" id="3.2.1.14" evidence="9"/>
<dbReference type="EC" id="2.4.-.-" evidence="7 8 9"/>
<dbReference type="EMBL" id="U18779">
    <property type="protein sequence ID" value="AAB65002.1"/>
    <property type="molecule type" value="Genomic_DNA"/>
</dbReference>
<dbReference type="EMBL" id="AY693014">
    <property type="protein sequence ID" value="AAT93033.1"/>
    <property type="molecule type" value="Genomic_DNA"/>
</dbReference>
<dbReference type="EMBL" id="L22173">
    <property type="protein sequence ID" value="AAA34941.1"/>
    <property type="status" value="ALT_FRAME"/>
    <property type="molecule type" value="Genomic_DNA"/>
</dbReference>
<dbReference type="EMBL" id="S65964">
    <property type="protein sequence ID" value="AAD13975.1"/>
    <property type="status" value="ALT_FRAME"/>
    <property type="molecule type" value="Genomic_DNA"/>
</dbReference>
<dbReference type="EMBL" id="S66130">
    <property type="protein sequence ID" value="AAB28444.1"/>
    <property type="status" value="ALT_FRAME"/>
    <property type="molecule type" value="mRNA"/>
</dbReference>
<dbReference type="EMBL" id="BK006939">
    <property type="protein sequence ID" value="DAA07613.1"/>
    <property type="molecule type" value="Genomic_DNA"/>
</dbReference>
<dbReference type="PIR" id="S30839">
    <property type="entry name" value="S30839"/>
</dbReference>
<dbReference type="RefSeq" id="NP_010874.3">
    <property type="nucleotide sequence ID" value="NM_001178855.3"/>
</dbReference>
<dbReference type="SMR" id="P32623"/>
<dbReference type="BioGRID" id="36689">
    <property type="interactions" value="112"/>
</dbReference>
<dbReference type="DIP" id="DIP-7767N"/>
<dbReference type="FunCoup" id="P32623">
    <property type="interactions" value="546"/>
</dbReference>
<dbReference type="IntAct" id="P32623">
    <property type="interactions" value="12"/>
</dbReference>
<dbReference type="MINT" id="P32623"/>
<dbReference type="STRING" id="4932.YEL040W"/>
<dbReference type="CAZy" id="CBM18">
    <property type="family name" value="Carbohydrate-Binding Module Family 18"/>
</dbReference>
<dbReference type="CAZy" id="GH16">
    <property type="family name" value="Glycoside Hydrolase Family 16"/>
</dbReference>
<dbReference type="TCDB" id="9.B.464.1.1">
    <property type="family name" value="the possible glycosylase crh2 (crh2) family"/>
</dbReference>
<dbReference type="GlyCosmos" id="P32623">
    <property type="glycosylation" value="9 sites, No reported glycans"/>
</dbReference>
<dbReference type="GlyGen" id="P32623">
    <property type="glycosylation" value="9 sites"/>
</dbReference>
<dbReference type="iPTMnet" id="P32623"/>
<dbReference type="PaxDb" id="4932-YEL040W"/>
<dbReference type="PeptideAtlas" id="P32623"/>
<dbReference type="EnsemblFungi" id="YEL040W_mRNA">
    <property type="protein sequence ID" value="YEL040W"/>
    <property type="gene ID" value="YEL040W"/>
</dbReference>
<dbReference type="GeneID" id="856671"/>
<dbReference type="KEGG" id="sce:YEL040W"/>
<dbReference type="AGR" id="SGD:S000000766"/>
<dbReference type="SGD" id="S000000766">
    <property type="gene designation" value="UTR2"/>
</dbReference>
<dbReference type="VEuPathDB" id="FungiDB:YEL040W"/>
<dbReference type="eggNOG" id="ENOG502QVQI">
    <property type="taxonomic scope" value="Eukaryota"/>
</dbReference>
<dbReference type="GeneTree" id="ENSGT00940000176705"/>
<dbReference type="HOGENOM" id="CLU_040459_0_0_1"/>
<dbReference type="InParanoid" id="P32623"/>
<dbReference type="OMA" id="WNATANQ"/>
<dbReference type="OrthoDB" id="4781at2759"/>
<dbReference type="BioCyc" id="YEAST:G3O-30161-MONOMER"/>
<dbReference type="BioGRID-ORCS" id="856671">
    <property type="hits" value="5 hits in 10 CRISPR screens"/>
</dbReference>
<dbReference type="PRO" id="PR:P32623"/>
<dbReference type="Proteomes" id="UP000002311">
    <property type="component" value="Chromosome V"/>
</dbReference>
<dbReference type="RNAct" id="P32623">
    <property type="molecule type" value="protein"/>
</dbReference>
<dbReference type="GO" id="GO:0000144">
    <property type="term" value="C:cellular bud neck septin ring"/>
    <property type="evidence" value="ECO:0000314"/>
    <property type="project" value="SGD"/>
</dbReference>
<dbReference type="GO" id="GO:0005576">
    <property type="term" value="C:extracellular region"/>
    <property type="evidence" value="ECO:0007669"/>
    <property type="project" value="UniProtKB-KW"/>
</dbReference>
<dbReference type="GO" id="GO:0009277">
    <property type="term" value="C:fungal-type cell wall"/>
    <property type="evidence" value="ECO:0000314"/>
    <property type="project" value="SGD"/>
</dbReference>
<dbReference type="GO" id="GO:0098552">
    <property type="term" value="C:side of membrane"/>
    <property type="evidence" value="ECO:0007669"/>
    <property type="project" value="UniProtKB-KW"/>
</dbReference>
<dbReference type="GO" id="GO:0016757">
    <property type="term" value="F:glycosyltransferase activity"/>
    <property type="evidence" value="ECO:0000314"/>
    <property type="project" value="SGD"/>
</dbReference>
<dbReference type="GO" id="GO:0004553">
    <property type="term" value="F:hydrolase activity, hydrolyzing O-glycosyl compounds"/>
    <property type="evidence" value="ECO:0007669"/>
    <property type="project" value="InterPro"/>
</dbReference>
<dbReference type="GO" id="GO:0005975">
    <property type="term" value="P:carbohydrate metabolic process"/>
    <property type="evidence" value="ECO:0007669"/>
    <property type="project" value="InterPro"/>
</dbReference>
<dbReference type="GO" id="GO:0006030">
    <property type="term" value="P:chitin metabolic process"/>
    <property type="evidence" value="ECO:0000315"/>
    <property type="project" value="SGD"/>
</dbReference>
<dbReference type="GO" id="GO:0031505">
    <property type="term" value="P:fungal-type cell wall organization"/>
    <property type="evidence" value="ECO:0000315"/>
    <property type="project" value="SGD"/>
</dbReference>
<dbReference type="CDD" id="cd06923">
    <property type="entry name" value="ChtBD1_GH16"/>
    <property type="match status" value="1"/>
</dbReference>
<dbReference type="CDD" id="cd02183">
    <property type="entry name" value="GH16_fungal_CRH1_transglycosylase"/>
    <property type="match status" value="1"/>
</dbReference>
<dbReference type="FunFam" id="2.60.120.200:FF:000159">
    <property type="entry name" value="Glycosidase"/>
    <property type="match status" value="1"/>
</dbReference>
<dbReference type="Gene3D" id="2.60.120.200">
    <property type="match status" value="1"/>
</dbReference>
<dbReference type="InterPro" id="IPR013320">
    <property type="entry name" value="ConA-like_dom_sf"/>
</dbReference>
<dbReference type="InterPro" id="IPR000757">
    <property type="entry name" value="GH16"/>
</dbReference>
<dbReference type="InterPro" id="IPR017168">
    <property type="entry name" value="Glyco_hydro_16_CRH1_prd"/>
</dbReference>
<dbReference type="InterPro" id="IPR050546">
    <property type="entry name" value="Glycosyl_Hydrlase_16"/>
</dbReference>
<dbReference type="PANTHER" id="PTHR10963:SF22">
    <property type="entry name" value="GLYCOSIDASE CRH2-RELATED"/>
    <property type="match status" value="1"/>
</dbReference>
<dbReference type="PANTHER" id="PTHR10963">
    <property type="entry name" value="GLYCOSYL HYDROLASE-RELATED"/>
    <property type="match status" value="1"/>
</dbReference>
<dbReference type="Pfam" id="PF00722">
    <property type="entry name" value="Glyco_hydro_16"/>
    <property type="match status" value="1"/>
</dbReference>
<dbReference type="PIRSF" id="PIRSF037299">
    <property type="entry name" value="Glycosidase_CRH1_prd"/>
    <property type="match status" value="1"/>
</dbReference>
<dbReference type="SUPFAM" id="SSF49899">
    <property type="entry name" value="Concanavalin A-like lectins/glucanases"/>
    <property type="match status" value="1"/>
</dbReference>
<dbReference type="PROSITE" id="PS51762">
    <property type="entry name" value="GH16_2"/>
    <property type="match status" value="1"/>
</dbReference>
<sequence>MAIVNSWLICLVSIFSFVVRVEAATFCNATQACPEDKPCCSQYGECGTGQYCLNNCDVRYSFSHDSCMPVPICKSSSTKFKDYSSKLGNANTFLGNVSEADWLYTGDVLDYDDEESLILAMPKNSGGTVLSSTRAVWYGKVSARIKTSHLAGVVTGFILYSGAGDELDYEFVGADLETAQTNFYWESVLNYTNSANISTTDTFENYHTYELDWHEDYVTWSIDGVVGRTLYKNETYNATTQKYQYPQTPSKVDISIWPGGNSTNAPGTIAWSGGEINWDASDISNPGYYYAIVNEVNITCYDPPSDTKKNGTSAYVYTSSSEFLAKDIAITDDEVMMDSDEGSGLDPHKGATTSSTQKSSSSTATSSSKTSSDHSSSTKKSSKTSSTASSSSSSSSSSSSSSSTATKNGDKVVSSVSSSVTSQTQTTSSVSGSASSSTSSMSGNNAGANVAANWRLTVLCVILGYVL</sequence>
<keyword id="KW-0134">Cell wall</keyword>
<keyword id="KW-0961">Cell wall biogenesis/degradation</keyword>
<keyword id="KW-1015">Disulfide bond</keyword>
<keyword id="KW-0325">Glycoprotein</keyword>
<keyword id="KW-0326">Glycosidase</keyword>
<keyword id="KW-0328">Glycosyltransferase</keyword>
<keyword id="KW-0336">GPI-anchor</keyword>
<keyword id="KW-0378">Hydrolase</keyword>
<keyword id="KW-0449">Lipoprotein</keyword>
<keyword id="KW-0472">Membrane</keyword>
<keyword id="KW-1185">Reference proteome</keyword>
<keyword id="KW-0964">Secreted</keyword>
<keyword id="KW-0732">Signal</keyword>
<keyword id="KW-0808">Transferase</keyword>
<protein>
    <recommendedName>
        <fullName evidence="10">Congo red hypersensitive protein 2</fullName>
    </recommendedName>
    <alternativeName>
        <fullName evidence="13">Unidentified transcript protein 2</fullName>
    </alternativeName>
    <domain>
        <recommendedName>
            <fullName evidence="12">Chitinase UTR2</fullName>
            <ecNumber evidence="9">3.2.1.14</ecNumber>
        </recommendedName>
    </domain>
    <domain>
        <recommendedName>
            <fullName evidence="11">Chitin transglycosylase UTR2</fullName>
            <ecNumber evidence="7 8 9">2.4.-.-</ecNumber>
        </recommendedName>
    </domain>
</protein>
<comment type="function">
    <text evidence="2 7 8 9">Dual chitinase/transglycosylase that plays a role in cell wall architecture (PubMed:18694928, PubMed:19734368, PubMed:23919454). Chitinase and transglycosylase activities are coupled (By similarity). Required for the polysaccharide cross-linking at the septa and the cell wall (PubMed:18694928, PubMed:19734368, PubMed:23919454). More specifically, transfers chitin to both beta(1-3)- and beta(1-6)glucan in the cell wall (PubMed:18694928, PubMed:19734368, PubMed:23919454). The minimal number of intact hexopyranose units required in the molecule of the acceptor oligosaccharide is two and the effectivity of the acceptor increased with the increasing length of its oligosaccharide chain (PubMed:23919454).</text>
</comment>
<comment type="catalytic activity">
    <reaction evidence="9">
        <text>Random endo-hydrolysis of N-acetyl-beta-D-glucosaminide (1-&gt;4)-beta-linkages in chitin and chitodextrins.</text>
        <dbReference type="EC" id="3.2.1.14"/>
    </reaction>
</comment>
<comment type="biophysicochemical properties">
    <phDependence>
        <text evidence="9">Optimum pH is 3.5.</text>
    </phDependence>
    <temperatureDependence>
        <text evidence="9">Optimum temperature is 37 degrees Celsius.</text>
    </temperatureDependence>
</comment>
<comment type="subcellular location">
    <subcellularLocation>
        <location evidence="6">Secreted</location>
        <location evidence="6">Cell wall</location>
    </subcellularLocation>
    <subcellularLocation>
        <location>Membrane</location>
        <topology evidence="3">Lipid-anchor</topology>
        <topology evidence="3">GPI-anchor</topology>
    </subcellularLocation>
    <text evidence="6">Covalently-linked GPI-modified cell wall protein (GPI-CWP), localized particularly in chitin-rich areas. Localizes to sites of polarized growth. Found at the incipient bud site, as a ring at the bud neck as the bud grows, and in the septum at the time of cytokinesis. Redistributes uniformly over the cell cortex upon heat stress.</text>
</comment>
<comment type="PTM">
    <text evidence="14">The GPI-anchor is attached to the protein in the endoplasmic reticulum and serves to target the protein to the cell surface. There, the glucosamine-inositol phospholipid moiety is cleaved off and the GPI-modified mannoprotein is covalently attached via its lipidless GPI glycan remnant to the 1,6-beta-glucan of the outer cell wall layer.</text>
</comment>
<comment type="similarity">
    <text evidence="14">Belongs to the glycosyl hydrolase 16 family. CRH1 subfamily.</text>
</comment>
<comment type="sequence caution" evidence="14">
    <conflict type="frameshift">
        <sequence resource="EMBL-CDS" id="AAA34941"/>
    </conflict>
</comment>
<comment type="sequence caution" evidence="14">
    <conflict type="frameshift">
        <sequence resource="EMBL-CDS" id="AAB28444"/>
    </conflict>
</comment>
<comment type="sequence caution" evidence="14">
    <conflict type="frameshift">
        <sequence resource="EMBL-CDS" id="AAD13975"/>
    </conflict>
</comment>
<name>CRH2_YEAST</name>
<feature type="signal peptide" evidence="3">
    <location>
        <begin position="1"/>
        <end position="23"/>
    </location>
</feature>
<feature type="chain" id="PRO_0000065745" description="Congo red hypersensitive protein 2">
    <location>
        <begin position="24"/>
        <end position="445"/>
    </location>
</feature>
<feature type="propeptide" id="PRO_0000232722" description="Removed in mature form" evidence="3">
    <location>
        <begin position="446"/>
        <end position="467"/>
    </location>
</feature>
<feature type="domain" description="GH16" evidence="4">
    <location>
        <begin position="63"/>
        <end position="280"/>
    </location>
</feature>
<feature type="region of interest" description="Disordered" evidence="5">
    <location>
        <begin position="337"/>
        <end position="444"/>
    </location>
</feature>
<feature type="compositionally biased region" description="Low complexity" evidence="5">
    <location>
        <begin position="351"/>
        <end position="444"/>
    </location>
</feature>
<feature type="active site" description="Nucleophile" evidence="1">
    <location>
        <position position="166"/>
    </location>
</feature>
<feature type="active site" description="Proton donor" evidence="1">
    <location>
        <position position="170"/>
    </location>
</feature>
<feature type="binding site" evidence="2">
    <location>
        <position position="170"/>
    </location>
    <ligand>
        <name>chitin</name>
        <dbReference type="ChEBI" id="CHEBI:17029"/>
    </ligand>
</feature>
<feature type="binding site" evidence="2">
    <location>
        <position position="257"/>
    </location>
    <ligand>
        <name>chitin</name>
        <dbReference type="ChEBI" id="CHEBI:17029"/>
    </ligand>
</feature>
<feature type="binding site" evidence="2">
    <location>
        <position position="268"/>
    </location>
    <ligand>
        <name>chitin</name>
        <dbReference type="ChEBI" id="CHEBI:17029"/>
    </ligand>
</feature>
<feature type="lipid moiety-binding region" description="GPI-anchor amidated asparagine" evidence="3">
    <location>
        <position position="445"/>
    </location>
</feature>
<feature type="glycosylation site" description="N-linked (GlcNAc...) asparagine" evidence="3">
    <location>
        <position position="28"/>
    </location>
</feature>
<feature type="glycosylation site" description="N-linked (GlcNAc...) asparagine" evidence="3">
    <location>
        <position position="96"/>
    </location>
</feature>
<feature type="glycosylation site" description="N-linked (GlcNAc...) asparagine" evidence="3">
    <location>
        <position position="190"/>
    </location>
</feature>
<feature type="glycosylation site" description="N-linked (GlcNAc...) asparagine" evidence="3">
    <location>
        <position position="196"/>
    </location>
</feature>
<feature type="glycosylation site" description="N-linked (GlcNAc...) asparagine" evidence="3">
    <location>
        <position position="233"/>
    </location>
</feature>
<feature type="glycosylation site" description="N-linked (GlcNAc...) asparagine" evidence="3">
    <location>
        <position position="237"/>
    </location>
</feature>
<feature type="glycosylation site" description="N-linked (GlcNAc...) asparagine" evidence="3">
    <location>
        <position position="261"/>
    </location>
</feature>
<feature type="glycosylation site" description="N-linked (GlcNAc...) asparagine" evidence="3">
    <location>
        <position position="297"/>
    </location>
</feature>
<feature type="glycosylation site" description="N-linked (GlcNAc...) asparagine" evidence="3">
    <location>
        <position position="310"/>
    </location>
</feature>
<feature type="disulfide bond" evidence="2">
    <location>
        <begin position="56"/>
        <end position="67"/>
    </location>
</feature>
<feature type="sequence conflict" description="In Ref. 4; AAA34941/AAD13975/AAB28444." evidence="14" ref="4">
    <original>L</original>
    <variation>V</variation>
    <location>
        <position position="130"/>
    </location>
</feature>
<feature type="sequence conflict" description="In Ref. 4; AAA34941/AAD13975/AAB28444." evidence="14" ref="4">
    <original>A</original>
    <variation>R</variation>
    <location>
        <position position="291"/>
    </location>
</feature>
<feature type="sequence conflict" description="In Ref. 4; AAA34941/AAD13975/AAB28444." evidence="14" ref="4">
    <original>S</original>
    <variation>C</variation>
    <location>
        <position position="354"/>
    </location>
</feature>
<accession>P32623</accession>
<accession>D3DLK9</accession>
<accession>Q6B1R6</accession>
<gene>
    <name evidence="13" type="primary">UTR2</name>
    <name evidence="10" type="synonym">CHR2</name>
    <name type="ordered locus">YEL040W</name>
    <name type="ORF">SYGP-ORF18</name>
</gene>
<evidence type="ECO:0000250" key="1">
    <source>
        <dbReference type="UniProtKB" id="P27051"/>
    </source>
</evidence>
<evidence type="ECO:0000250" key="2">
    <source>
        <dbReference type="UniProtKB" id="Q8J0P4"/>
    </source>
</evidence>
<evidence type="ECO:0000255" key="3"/>
<evidence type="ECO:0000255" key="4">
    <source>
        <dbReference type="PROSITE-ProRule" id="PRU01098"/>
    </source>
</evidence>
<evidence type="ECO:0000256" key="5">
    <source>
        <dbReference type="SAM" id="MobiDB-lite"/>
    </source>
</evidence>
<evidence type="ECO:0000269" key="6">
    <source>
    </source>
</evidence>
<evidence type="ECO:0000269" key="7">
    <source>
    </source>
</evidence>
<evidence type="ECO:0000269" key="8">
    <source>
    </source>
</evidence>
<evidence type="ECO:0000269" key="9">
    <source>
    </source>
</evidence>
<evidence type="ECO:0000303" key="10">
    <source>
    </source>
</evidence>
<evidence type="ECO:0000303" key="11">
    <source>
    </source>
</evidence>
<evidence type="ECO:0000303" key="12">
    <source>
    </source>
</evidence>
<evidence type="ECO:0000303" key="13">
    <source>
    </source>
</evidence>
<evidence type="ECO:0000305" key="14"/>
<reference key="1">
    <citation type="journal article" date="1997" name="Nature">
        <title>The nucleotide sequence of Saccharomyces cerevisiae chromosome V.</title>
        <authorList>
            <person name="Dietrich F.S."/>
            <person name="Mulligan J.T."/>
            <person name="Hennessy K.M."/>
            <person name="Yelton M.A."/>
            <person name="Allen E."/>
            <person name="Araujo R."/>
            <person name="Aviles E."/>
            <person name="Berno A."/>
            <person name="Brennan T."/>
            <person name="Carpenter J."/>
            <person name="Chen E."/>
            <person name="Cherry J.M."/>
            <person name="Chung E."/>
            <person name="Duncan M."/>
            <person name="Guzman E."/>
            <person name="Hartzell G."/>
            <person name="Hunicke-Smith S."/>
            <person name="Hyman R.W."/>
            <person name="Kayser A."/>
            <person name="Komp C."/>
            <person name="Lashkari D."/>
            <person name="Lew H."/>
            <person name="Lin D."/>
            <person name="Mosedale D."/>
            <person name="Nakahara K."/>
            <person name="Namath A."/>
            <person name="Norgren R."/>
            <person name="Oefner P."/>
            <person name="Oh C."/>
            <person name="Petel F.X."/>
            <person name="Roberts D."/>
            <person name="Sehl P."/>
            <person name="Schramm S."/>
            <person name="Shogren T."/>
            <person name="Smith V."/>
            <person name="Taylor P."/>
            <person name="Wei Y."/>
            <person name="Botstein D."/>
            <person name="Davis R.W."/>
        </authorList>
    </citation>
    <scope>NUCLEOTIDE SEQUENCE [LARGE SCALE GENOMIC DNA]</scope>
    <source>
        <strain>ATCC 204508 / S288c</strain>
    </source>
</reference>
<reference key="2">
    <citation type="journal article" date="2014" name="G3 (Bethesda)">
        <title>The reference genome sequence of Saccharomyces cerevisiae: Then and now.</title>
        <authorList>
            <person name="Engel S.R."/>
            <person name="Dietrich F.S."/>
            <person name="Fisk D.G."/>
            <person name="Binkley G."/>
            <person name="Balakrishnan R."/>
            <person name="Costanzo M.C."/>
            <person name="Dwight S.S."/>
            <person name="Hitz B.C."/>
            <person name="Karra K."/>
            <person name="Nash R.S."/>
            <person name="Weng S."/>
            <person name="Wong E.D."/>
            <person name="Lloyd P."/>
            <person name="Skrzypek M.S."/>
            <person name="Miyasato S.R."/>
            <person name="Simison M."/>
            <person name="Cherry J.M."/>
        </authorList>
    </citation>
    <scope>GENOME REANNOTATION</scope>
    <source>
        <strain>ATCC 204508 / S288c</strain>
    </source>
</reference>
<reference key="3">
    <citation type="journal article" date="2007" name="Genome Res.">
        <title>Approaching a complete repository of sequence-verified protein-encoding clones for Saccharomyces cerevisiae.</title>
        <authorList>
            <person name="Hu Y."/>
            <person name="Rolfs A."/>
            <person name="Bhullar B."/>
            <person name="Murthy T.V.S."/>
            <person name="Zhu C."/>
            <person name="Berger M.F."/>
            <person name="Camargo A.A."/>
            <person name="Kelley F."/>
            <person name="McCarron S."/>
            <person name="Jepson D."/>
            <person name="Richardson A."/>
            <person name="Raphael J."/>
            <person name="Moreira D."/>
            <person name="Taycher E."/>
            <person name="Zuo D."/>
            <person name="Mohr S."/>
            <person name="Kane M.F."/>
            <person name="Williamson J."/>
            <person name="Simpson A.J.G."/>
            <person name="Bulyk M.L."/>
            <person name="Harlow E."/>
            <person name="Marsischky G."/>
            <person name="Kolodner R.D."/>
            <person name="LaBaer J."/>
        </authorList>
    </citation>
    <scope>NUCLEOTIDE SEQUENCE [GENOMIC DNA]</scope>
    <source>
        <strain>ATCC 204508 / S288c</strain>
    </source>
</reference>
<reference key="4">
    <citation type="journal article" date="1993" name="J. Mol. Biol.">
        <title>The gene clusters ARC and COR on chromosomes 5 and 10, respectively, of Saccharomyces cerevisiae share a common ancestry.</title>
        <authorList>
            <person name="Melnick L."/>
            <person name="Sherman F."/>
        </authorList>
    </citation>
    <scope>NUCLEOTIDE SEQUENCE [GENOMIC DNA / MRNA] OF 76-467</scope>
    <source>
        <strain>B-6441</strain>
    </source>
</reference>
<reference key="5">
    <citation type="journal article" date="1998" name="Mol. Gen. Genet.">
        <title>Screening for glycosylphosphatidylinositol (GPI)-dependent cell wall proteins in Saccharomyces cerevisiae.</title>
        <authorList>
            <person name="Hamada K."/>
            <person name="Fukuchi S."/>
            <person name="Arisawa M."/>
            <person name="Baba M."/>
            <person name="Kitada K."/>
        </authorList>
    </citation>
    <scope>SUBCELLULAR LOCATION</scope>
</reference>
<reference key="6">
    <citation type="journal article" date="2000" name="Mol. Cell. Biol.">
        <title>A novel family of cell wall-related proteins regulated differently during the yeast life cycle.</title>
        <authorList>
            <person name="Rodriguez-Pena J.M."/>
            <person name="Cid V.J."/>
            <person name="Arroyo J."/>
            <person name="Nombela C."/>
        </authorList>
    </citation>
    <scope>FUNCTION</scope>
    <scope>SUBCELLULAR LOCATION</scope>
</reference>
<reference key="7">
    <citation type="journal article" date="2002" name="J. Cell Sci.">
        <title>Mechanisms for targeting of the Saccharomyces cerevisiae GPI-anchored cell wall protein Crh2p to polarised growth sites.</title>
        <authorList>
            <person name="Rodriguez-Pena J.M."/>
            <person name="Rodriguez C."/>
            <person name="Alvarez A."/>
            <person name="Nombela C."/>
            <person name="Arroyo J."/>
        </authorList>
    </citation>
    <scope>SUBCELLULAR LOCATION</scope>
</reference>
<reference key="8">
    <citation type="journal article" date="2005" name="J. Biol. Chem.">
        <title>Comprehensive proteomic analysis of Saccharomyces cerevisiae cell walls: identification of proteins covalently attached via glycosylphosphatidylinositol remnants or mild alkali-sensitive linkages.</title>
        <authorList>
            <person name="Yin Q.Y."/>
            <person name="de Groot P.W.J."/>
            <person name="Dekker H.L."/>
            <person name="de Jong L."/>
            <person name="Klis F.M."/>
            <person name="de Koster C.G."/>
        </authorList>
    </citation>
    <scope>SUBCELLULAR LOCATION</scope>
    <scope>IDENTIFICATION BY MASS SPECTROMETRY</scope>
</reference>
<reference key="9">
    <citation type="journal article" date="2007" name="Mol. Microbiol.">
        <title>Crh1p and Crh2p are required for the cross-linking of chitin to beta(1-6)glucan in the Saccharomyces cerevisiae cell wall.</title>
        <authorList>
            <person name="Cabib E."/>
            <person name="Blanco N."/>
            <person name="Grau C."/>
            <person name="Rodriguez-Pena J.M."/>
            <person name="Arroyo J."/>
        </authorList>
    </citation>
    <scope>FUNCTION</scope>
    <scope>SUBCELLULAR LOCATION</scope>
    <scope>INDUCTION BY HEAT STRESS</scope>
</reference>
<reference key="10">
    <citation type="journal article" date="2008" name="J. Biol. Chem.">
        <title>Assembly of the yeast cell wall. Crh1p and Crh2p act as transglycosylases in vivo and in vitro.</title>
        <authorList>
            <person name="Cabib E."/>
            <person name="Farkas V."/>
            <person name="Kosik O."/>
            <person name="Blanco N."/>
            <person name="Arroyo J."/>
            <person name="McPhie P."/>
        </authorList>
    </citation>
    <scope>FUNCTION</scope>
    <scope>CATALYTIC ACTIVITY</scope>
</reference>
<reference key="11">
    <citation type="journal article" date="2009" name="Eukaryot. Cell">
        <title>Two novel techniques for determination of polysaccharide cross-links show that Crh1p and Crh2p attach chitin to both beta(1-6)- and beta(1-3)glucan in the Saccharomyces cerevisiae cell wall.</title>
        <authorList>
            <person name="Cabib E."/>
        </authorList>
    </citation>
    <scope>FUNCTION</scope>
    <scope>CATALYTIC ACTIVITY</scope>
</reference>
<reference key="12">
    <citation type="journal article" date="2013" name="Biochem. J.">
        <title>A novel fluorescence assay and catalytic properties of Crh1 and Crh2 yeast cell wall transglycosylases.</title>
        <authorList>
            <person name="Mazan M."/>
            <person name="Blanco N."/>
            <person name="Kovacova K."/>
            <person name="Firakova Z."/>
            <person name="Rehulka P."/>
            <person name="Farkas V."/>
            <person name="Arroyo J."/>
        </authorList>
    </citation>
    <scope>FUNCTION</scope>
    <scope>CATALYTIC ACTIVITY</scope>
    <scope>BIOPHYSICOCHEMICAL PROPERTIES</scope>
    <scope>SUBSTRATE SPECIFICITY</scope>
</reference>
<organism>
    <name type="scientific">Saccharomyces cerevisiae (strain ATCC 204508 / S288c)</name>
    <name type="common">Baker's yeast</name>
    <dbReference type="NCBI Taxonomy" id="559292"/>
    <lineage>
        <taxon>Eukaryota</taxon>
        <taxon>Fungi</taxon>
        <taxon>Dikarya</taxon>
        <taxon>Ascomycota</taxon>
        <taxon>Saccharomycotina</taxon>
        <taxon>Saccharomycetes</taxon>
        <taxon>Saccharomycetales</taxon>
        <taxon>Saccharomycetaceae</taxon>
        <taxon>Saccharomyces</taxon>
    </lineage>
</organism>
<proteinExistence type="evidence at protein level"/>